<evidence type="ECO:0000255" key="1">
    <source>
        <dbReference type="HAMAP-Rule" id="MF_00107"/>
    </source>
</evidence>
<name>ISPF_KLEP7</name>
<keyword id="KW-0414">Isoprene biosynthesis</keyword>
<keyword id="KW-0456">Lyase</keyword>
<keyword id="KW-0479">Metal-binding</keyword>
<dbReference type="EC" id="4.6.1.12" evidence="1"/>
<dbReference type="EMBL" id="CP000647">
    <property type="protein sequence ID" value="ABR78509.1"/>
    <property type="molecule type" value="Genomic_DNA"/>
</dbReference>
<dbReference type="RefSeq" id="WP_004181093.1">
    <property type="nucleotide sequence ID" value="NC_009648.1"/>
</dbReference>
<dbReference type="SMR" id="A6TD38"/>
<dbReference type="STRING" id="272620.KPN_03108"/>
<dbReference type="jPOST" id="A6TD38"/>
<dbReference type="PaxDb" id="272620-KPN_03108"/>
<dbReference type="EnsemblBacteria" id="ABR78509">
    <property type="protein sequence ID" value="ABR78509"/>
    <property type="gene ID" value="KPN_03108"/>
</dbReference>
<dbReference type="GeneID" id="69753800"/>
<dbReference type="KEGG" id="kpn:KPN_03108"/>
<dbReference type="HOGENOM" id="CLU_084630_2_0_6"/>
<dbReference type="UniPathway" id="UPA00056">
    <property type="reaction ID" value="UER00095"/>
</dbReference>
<dbReference type="Proteomes" id="UP000000265">
    <property type="component" value="Chromosome"/>
</dbReference>
<dbReference type="GO" id="GO:0008685">
    <property type="term" value="F:2-C-methyl-D-erythritol 2,4-cyclodiphosphate synthase activity"/>
    <property type="evidence" value="ECO:0007669"/>
    <property type="project" value="UniProtKB-UniRule"/>
</dbReference>
<dbReference type="GO" id="GO:0046872">
    <property type="term" value="F:metal ion binding"/>
    <property type="evidence" value="ECO:0007669"/>
    <property type="project" value="UniProtKB-KW"/>
</dbReference>
<dbReference type="GO" id="GO:0019288">
    <property type="term" value="P:isopentenyl diphosphate biosynthetic process, methylerythritol 4-phosphate pathway"/>
    <property type="evidence" value="ECO:0007669"/>
    <property type="project" value="UniProtKB-UniRule"/>
</dbReference>
<dbReference type="GO" id="GO:0016114">
    <property type="term" value="P:terpenoid biosynthetic process"/>
    <property type="evidence" value="ECO:0007669"/>
    <property type="project" value="InterPro"/>
</dbReference>
<dbReference type="CDD" id="cd00554">
    <property type="entry name" value="MECDP_synthase"/>
    <property type="match status" value="1"/>
</dbReference>
<dbReference type="FunFam" id="3.30.1330.50:FF:000001">
    <property type="entry name" value="2-C-methyl-D-erythritol 2,4-cyclodiphosphate synthase"/>
    <property type="match status" value="1"/>
</dbReference>
<dbReference type="Gene3D" id="3.30.1330.50">
    <property type="entry name" value="2-C-methyl-D-erythritol 2,4-cyclodiphosphate synthase"/>
    <property type="match status" value="1"/>
</dbReference>
<dbReference type="HAMAP" id="MF_00107">
    <property type="entry name" value="IspF"/>
    <property type="match status" value="1"/>
</dbReference>
<dbReference type="InterPro" id="IPR003526">
    <property type="entry name" value="MECDP_synthase"/>
</dbReference>
<dbReference type="InterPro" id="IPR020555">
    <property type="entry name" value="MECDP_synthase_CS"/>
</dbReference>
<dbReference type="InterPro" id="IPR036571">
    <property type="entry name" value="MECDP_synthase_sf"/>
</dbReference>
<dbReference type="NCBIfam" id="TIGR00151">
    <property type="entry name" value="ispF"/>
    <property type="match status" value="1"/>
</dbReference>
<dbReference type="PANTHER" id="PTHR43181">
    <property type="entry name" value="2-C-METHYL-D-ERYTHRITOL 2,4-CYCLODIPHOSPHATE SYNTHASE, CHLOROPLASTIC"/>
    <property type="match status" value="1"/>
</dbReference>
<dbReference type="PANTHER" id="PTHR43181:SF1">
    <property type="entry name" value="2-C-METHYL-D-ERYTHRITOL 2,4-CYCLODIPHOSPHATE SYNTHASE, CHLOROPLASTIC"/>
    <property type="match status" value="1"/>
</dbReference>
<dbReference type="Pfam" id="PF02542">
    <property type="entry name" value="YgbB"/>
    <property type="match status" value="1"/>
</dbReference>
<dbReference type="SUPFAM" id="SSF69765">
    <property type="entry name" value="IpsF-like"/>
    <property type="match status" value="1"/>
</dbReference>
<dbReference type="PROSITE" id="PS01350">
    <property type="entry name" value="ISPF"/>
    <property type="match status" value="1"/>
</dbReference>
<sequence>MRIGHGFDVHAFGGEGPIIIGGVRIPYEKGLLAHSDGDVALHALTDALLGAAALGDIGKLFPDTDPAFKGADSRELLREAWRRIQAKGYTLGNVDVTIIAQAPKMLPHIPQMRVFIAEDLGCHMDDVNVKATTTEKLGFTGRGEGIACEAVALLRKADK</sequence>
<proteinExistence type="inferred from homology"/>
<feature type="chain" id="PRO_1000022847" description="2-C-methyl-D-erythritol 2,4-cyclodiphosphate synthase">
    <location>
        <begin position="1"/>
        <end position="159"/>
    </location>
</feature>
<feature type="binding site" evidence="1">
    <location>
        <begin position="8"/>
        <end position="10"/>
    </location>
    <ligand>
        <name>4-CDP-2-C-methyl-D-erythritol 2-phosphate</name>
        <dbReference type="ChEBI" id="CHEBI:57919"/>
    </ligand>
</feature>
<feature type="binding site" evidence="1">
    <location>
        <position position="8"/>
    </location>
    <ligand>
        <name>a divalent metal cation</name>
        <dbReference type="ChEBI" id="CHEBI:60240"/>
    </ligand>
</feature>
<feature type="binding site" evidence="1">
    <location>
        <position position="10"/>
    </location>
    <ligand>
        <name>a divalent metal cation</name>
        <dbReference type="ChEBI" id="CHEBI:60240"/>
    </ligand>
</feature>
<feature type="binding site" evidence="1">
    <location>
        <begin position="34"/>
        <end position="35"/>
    </location>
    <ligand>
        <name>4-CDP-2-C-methyl-D-erythritol 2-phosphate</name>
        <dbReference type="ChEBI" id="CHEBI:57919"/>
    </ligand>
</feature>
<feature type="binding site" evidence="1">
    <location>
        <position position="42"/>
    </location>
    <ligand>
        <name>a divalent metal cation</name>
        <dbReference type="ChEBI" id="CHEBI:60240"/>
    </ligand>
</feature>
<feature type="binding site" evidence="1">
    <location>
        <begin position="56"/>
        <end position="58"/>
    </location>
    <ligand>
        <name>4-CDP-2-C-methyl-D-erythritol 2-phosphate</name>
        <dbReference type="ChEBI" id="CHEBI:57919"/>
    </ligand>
</feature>
<feature type="binding site" evidence="1">
    <location>
        <begin position="61"/>
        <end position="65"/>
    </location>
    <ligand>
        <name>4-CDP-2-C-methyl-D-erythritol 2-phosphate</name>
        <dbReference type="ChEBI" id="CHEBI:57919"/>
    </ligand>
</feature>
<feature type="binding site" evidence="1">
    <location>
        <begin position="100"/>
        <end position="106"/>
    </location>
    <ligand>
        <name>4-CDP-2-C-methyl-D-erythritol 2-phosphate</name>
        <dbReference type="ChEBI" id="CHEBI:57919"/>
    </ligand>
</feature>
<feature type="binding site" evidence="1">
    <location>
        <begin position="132"/>
        <end position="135"/>
    </location>
    <ligand>
        <name>4-CDP-2-C-methyl-D-erythritol 2-phosphate</name>
        <dbReference type="ChEBI" id="CHEBI:57919"/>
    </ligand>
</feature>
<feature type="binding site" evidence="1">
    <location>
        <position position="139"/>
    </location>
    <ligand>
        <name>4-CDP-2-C-methyl-D-erythritol 2-phosphate</name>
        <dbReference type="ChEBI" id="CHEBI:57919"/>
    </ligand>
</feature>
<feature type="binding site" evidence="1">
    <location>
        <position position="142"/>
    </location>
    <ligand>
        <name>4-CDP-2-C-methyl-D-erythritol 2-phosphate</name>
        <dbReference type="ChEBI" id="CHEBI:57919"/>
    </ligand>
</feature>
<feature type="site" description="Transition state stabilizer" evidence="1">
    <location>
        <position position="34"/>
    </location>
</feature>
<feature type="site" description="Transition state stabilizer" evidence="1">
    <location>
        <position position="133"/>
    </location>
</feature>
<comment type="function">
    <text evidence="1">Involved in the biosynthesis of isopentenyl diphosphate (IPP) and dimethylallyl diphosphate (DMAPP), two major building blocks of isoprenoid compounds. Catalyzes the conversion of 4-diphosphocytidyl-2-C-methyl-D-erythritol 2-phosphate (CDP-ME2P) to 2-C-methyl-D-erythritol 2,4-cyclodiphosphate (ME-CPP) with a corresponding release of cytidine 5-monophosphate (CMP).</text>
</comment>
<comment type="catalytic activity">
    <reaction evidence="1">
        <text>4-CDP-2-C-methyl-D-erythritol 2-phosphate = 2-C-methyl-D-erythritol 2,4-cyclic diphosphate + CMP</text>
        <dbReference type="Rhea" id="RHEA:23864"/>
        <dbReference type="ChEBI" id="CHEBI:57919"/>
        <dbReference type="ChEBI" id="CHEBI:58483"/>
        <dbReference type="ChEBI" id="CHEBI:60377"/>
        <dbReference type="EC" id="4.6.1.12"/>
    </reaction>
</comment>
<comment type="cofactor">
    <cofactor evidence="1">
        <name>a divalent metal cation</name>
        <dbReference type="ChEBI" id="CHEBI:60240"/>
    </cofactor>
    <text evidence="1">Binds 1 divalent metal cation per subunit.</text>
</comment>
<comment type="pathway">
    <text evidence="1">Isoprenoid biosynthesis; isopentenyl diphosphate biosynthesis via DXP pathway; isopentenyl diphosphate from 1-deoxy-D-xylulose 5-phosphate: step 4/6.</text>
</comment>
<comment type="subunit">
    <text evidence="1">Homotrimer.</text>
</comment>
<comment type="similarity">
    <text evidence="1">Belongs to the IspF family.</text>
</comment>
<organism>
    <name type="scientific">Klebsiella pneumoniae subsp. pneumoniae (strain ATCC 700721 / MGH 78578)</name>
    <dbReference type="NCBI Taxonomy" id="272620"/>
    <lineage>
        <taxon>Bacteria</taxon>
        <taxon>Pseudomonadati</taxon>
        <taxon>Pseudomonadota</taxon>
        <taxon>Gammaproteobacteria</taxon>
        <taxon>Enterobacterales</taxon>
        <taxon>Enterobacteriaceae</taxon>
        <taxon>Klebsiella/Raoultella group</taxon>
        <taxon>Klebsiella</taxon>
        <taxon>Klebsiella pneumoniae complex</taxon>
    </lineage>
</organism>
<accession>A6TD38</accession>
<gene>
    <name evidence="1" type="primary">ispF</name>
    <name type="ordered locus">KPN78578_30480</name>
    <name type="ORF">KPN_03108</name>
</gene>
<protein>
    <recommendedName>
        <fullName evidence="1">2-C-methyl-D-erythritol 2,4-cyclodiphosphate synthase</fullName>
        <shortName evidence="1">MECDP-synthase</shortName>
        <shortName evidence="1">MECPP-synthase</shortName>
        <shortName evidence="1">MECPS</shortName>
        <ecNumber evidence="1">4.6.1.12</ecNumber>
    </recommendedName>
</protein>
<reference key="1">
    <citation type="submission" date="2006-09" db="EMBL/GenBank/DDBJ databases">
        <authorList>
            <consortium name="The Klebsiella pneumonia Genome Sequencing Project"/>
            <person name="McClelland M."/>
            <person name="Sanderson E.K."/>
            <person name="Spieth J."/>
            <person name="Clifton W.S."/>
            <person name="Latreille P."/>
            <person name="Sabo A."/>
            <person name="Pepin K."/>
            <person name="Bhonagiri V."/>
            <person name="Porwollik S."/>
            <person name="Ali J."/>
            <person name="Wilson R.K."/>
        </authorList>
    </citation>
    <scope>NUCLEOTIDE SEQUENCE [LARGE SCALE GENOMIC DNA]</scope>
    <source>
        <strain>ATCC 700721 / MGH 78578</strain>
    </source>
</reference>